<feature type="chain" id="PRO_0000407374" description="Tyrosine ammonia-lyase">
    <location>
        <begin position="1"/>
        <end position="533"/>
    </location>
</feature>
<feature type="active site" description="Proton donor/acceptor" evidence="1">
    <location>
        <position position="57"/>
    </location>
</feature>
<feature type="binding site" evidence="1">
    <location>
        <position position="87"/>
    </location>
    <ligand>
        <name>substrate</name>
    </ligand>
</feature>
<feature type="binding site" evidence="1">
    <location>
        <position position="200"/>
    </location>
    <ligand>
        <name>substrate</name>
    </ligand>
</feature>
<feature type="binding site" evidence="1">
    <location>
        <position position="305"/>
    </location>
    <ligand>
        <name>substrate</name>
    </ligand>
</feature>
<feature type="modified residue" description="2,3-didehydroalanine (Ser)" evidence="2 3">
    <location>
        <position position="147"/>
    </location>
</feature>
<feature type="cross-link" description="5-imidazolinone (Ala-Gly)" evidence="2">
    <location>
        <begin position="146"/>
        <end position="148"/>
    </location>
</feature>
<reference key="1">
    <citation type="journal article" date="2010" name="PLoS ONE">
        <title>The complete genome sequence of Cupriavidus metallidurans strain CH34, a master survivalist in harsh and anthropogenic environments.</title>
        <authorList>
            <person name="Janssen P.J."/>
            <person name="Van Houdt R."/>
            <person name="Moors H."/>
            <person name="Monsieurs P."/>
            <person name="Morin N."/>
            <person name="Michaux A."/>
            <person name="Benotmane M.A."/>
            <person name="Leys N."/>
            <person name="Vallaeys T."/>
            <person name="Lapidus A."/>
            <person name="Monchy S."/>
            <person name="Medigue C."/>
            <person name="Taghavi S."/>
            <person name="McCorkle S."/>
            <person name="Dunn J."/>
            <person name="van der Lelie D."/>
            <person name="Mergeay M."/>
        </authorList>
    </citation>
    <scope>NUCLEOTIDE SEQUENCE [LARGE SCALE GENOMIC DNA]</scope>
    <source>
        <strain>ATCC 43123 / DSM 2839 / NBRC 102507 / CH34</strain>
    </source>
</reference>
<reference evidence="6" key="2">
    <citation type="journal article" date="2009" name="ChemBioChem">
        <title>Discovery of additional members of the tyrosine aminomutase enzyme family and the mutational analysis of CmdF.</title>
        <authorList>
            <person name="Krug D."/>
            <person name="Muller R."/>
        </authorList>
    </citation>
    <scope>FUNCTION</scope>
    <scope>CATALYTIC ACTIVITY</scope>
    <scope>BIOPHYSICOCHEMICAL PROPERTIES</scope>
</reference>
<comment type="function">
    <text evidence="4">Has ammonia-lyase and, to a lesser extent, aminomutase activity. Catalyzes the rearrangement of L-tyrosine to R-beta-tyrosine and S-beta-tyrosine. Does not accept L-histidine or L-phenylalanine as substrates.</text>
</comment>
<comment type="catalytic activity">
    <reaction evidence="4">
        <text>L-tyrosine = (E)-4-coumarate + NH4(+)</text>
        <dbReference type="Rhea" id="RHEA:24906"/>
        <dbReference type="ChEBI" id="CHEBI:12876"/>
        <dbReference type="ChEBI" id="CHEBI:28938"/>
        <dbReference type="ChEBI" id="CHEBI:58315"/>
        <dbReference type="EC" id="4.3.1.23"/>
    </reaction>
</comment>
<comment type="catalytic activity">
    <reaction evidence="4">
        <text>L-tyrosine = 3-amino-3-(4-hydroxyphenyl)propanoate</text>
        <dbReference type="Rhea" id="RHEA:15781"/>
        <dbReference type="ChEBI" id="CHEBI:57956"/>
        <dbReference type="ChEBI" id="CHEBI:58315"/>
        <dbReference type="EC" id="5.4.3.6"/>
    </reaction>
</comment>
<comment type="biophysicochemical properties">
    <kinetics>
        <KM evidence="4">348 uM for L-tyrosine (tyrosine 2,3-aminomutase activity)</KM>
    </kinetics>
</comment>
<comment type="subunit">
    <text evidence="1">Homotetramer; dimer of dimers.</text>
</comment>
<comment type="PTM">
    <text evidence="2">Contains an active site 4-methylidene-imidazol-5-one (MIO), which is formed autocatalytically by cyclization and dehydration of residues Ala-Ser-Gly.</text>
</comment>
<comment type="similarity">
    <text evidence="4">Belongs to the TAL/TAM family.</text>
</comment>
<dbReference type="EC" id="4.3.1.23"/>
<dbReference type="EC" id="5.4.3.6"/>
<dbReference type="EMBL" id="CP000352">
    <property type="protein sequence ID" value="ABF07117.1"/>
    <property type="molecule type" value="Genomic_DNA"/>
</dbReference>
<dbReference type="RefSeq" id="WP_011515131.1">
    <property type="nucleotide sequence ID" value="NC_007973.1"/>
</dbReference>
<dbReference type="SMR" id="Q1LRV9"/>
<dbReference type="STRING" id="266264.Rmet_0231"/>
<dbReference type="KEGG" id="rme:Rmet_0231"/>
<dbReference type="eggNOG" id="COG2986">
    <property type="taxonomic scope" value="Bacteria"/>
</dbReference>
<dbReference type="HOGENOM" id="CLU_014801_4_1_4"/>
<dbReference type="SABIO-RK" id="Q1LRV9"/>
<dbReference type="Proteomes" id="UP000002429">
    <property type="component" value="Chromosome"/>
</dbReference>
<dbReference type="GO" id="GO:0016841">
    <property type="term" value="F:ammonia-lyase activity"/>
    <property type="evidence" value="ECO:0000314"/>
    <property type="project" value="UniProtKB"/>
</dbReference>
<dbReference type="GO" id="GO:0050368">
    <property type="term" value="F:L-tyrosine 2,3-aminomutase activity"/>
    <property type="evidence" value="ECO:0000314"/>
    <property type="project" value="UniProtKB"/>
</dbReference>
<dbReference type="GO" id="GO:0052883">
    <property type="term" value="F:tyrosine ammonia-lyase activity"/>
    <property type="evidence" value="ECO:0007669"/>
    <property type="project" value="UniProtKB-EC"/>
</dbReference>
<dbReference type="CDD" id="cd00332">
    <property type="entry name" value="PAL-HAL"/>
    <property type="match status" value="1"/>
</dbReference>
<dbReference type="FunFam" id="1.10.275.10:FF:000005">
    <property type="entry name" value="Histidine ammonia-lyase"/>
    <property type="match status" value="1"/>
</dbReference>
<dbReference type="FunFam" id="1.20.200.10:FF:000003">
    <property type="entry name" value="Histidine ammonia-lyase"/>
    <property type="match status" value="1"/>
</dbReference>
<dbReference type="Gene3D" id="1.20.200.10">
    <property type="entry name" value="Fumarase/aspartase (Central domain)"/>
    <property type="match status" value="1"/>
</dbReference>
<dbReference type="Gene3D" id="1.10.275.10">
    <property type="entry name" value="Fumarase/aspartase (N-terminal domain)"/>
    <property type="match status" value="1"/>
</dbReference>
<dbReference type="InterPro" id="IPR001106">
    <property type="entry name" value="Aromatic_Lyase"/>
</dbReference>
<dbReference type="InterPro" id="IPR024083">
    <property type="entry name" value="Fumarase/histidase_N"/>
</dbReference>
<dbReference type="InterPro" id="IPR008948">
    <property type="entry name" value="L-Aspartase-like"/>
</dbReference>
<dbReference type="InterPro" id="IPR022313">
    <property type="entry name" value="Phe/His_NH3-lyase_AS"/>
</dbReference>
<dbReference type="InterPro" id="IPR022314">
    <property type="entry name" value="Tyr_aminomutase"/>
</dbReference>
<dbReference type="NCBIfam" id="NF006871">
    <property type="entry name" value="PRK09367.1"/>
    <property type="match status" value="1"/>
</dbReference>
<dbReference type="NCBIfam" id="TIGR03832">
    <property type="entry name" value="Tyr_2_3_mutase"/>
    <property type="match status" value="1"/>
</dbReference>
<dbReference type="PANTHER" id="PTHR10362">
    <property type="entry name" value="HISTIDINE AMMONIA-LYASE"/>
    <property type="match status" value="1"/>
</dbReference>
<dbReference type="Pfam" id="PF00221">
    <property type="entry name" value="Lyase_aromatic"/>
    <property type="match status" value="1"/>
</dbReference>
<dbReference type="SUPFAM" id="SSF48557">
    <property type="entry name" value="L-aspartase-like"/>
    <property type="match status" value="1"/>
</dbReference>
<dbReference type="PROSITE" id="PS00488">
    <property type="entry name" value="PAL_HISTIDASE"/>
    <property type="match status" value="1"/>
</dbReference>
<protein>
    <recommendedName>
        <fullName evidence="5">Tyrosine ammonia-lyase</fullName>
        <shortName evidence="5">CmTAL</shortName>
        <ecNumber>4.3.1.23</ecNumber>
    </recommendedName>
    <alternativeName>
        <fullName evidence="5">Tyrosine 2,3-aminomutase</fullName>
        <ecNumber>5.4.3.6</ecNumber>
    </alternativeName>
</protein>
<proteinExistence type="evidence at protein level"/>
<sequence>MPHAHPADIDGHHLTPDTVAAIARGQRAAIVPEPVLGKVADARARFEQVAAANVPIYGVSTGFGELVHNWVDIEHGRALQENLLRSHCAGVGPLFSRDEVRAMMVARANALARGYSAVRPAVIEQLLKYLEAGITPAVPQVGSLGASGDLAPLSHVAITLIGEGKVLTEDGGTAPTAEVLRERGITPLALAYKEGLALINGTSAMTGVSCLLLETLRAQVQQAEIIAALALEGLSASADAFMAHGHDIAKPHPGQIRSAANMRALLADSARLSGHGELSAEMKTRAGEAKNTGTGVFIQKAYTLRCIPQVLGAVRDTLDHCATVVERELNSSNDNPLFFEDGELFHGGNFHGQQVAFAMDFLAIAATQLGVVSERRLNRLLSPHLNNNLPAFLAAANEGLSCGFAGAQYPATALIAENRTICSPASIQSVPSNGDNQDVVSMGLIAARNARRILDNNQYILALELLASCQAAELAGAVEQLAPAGRAVFAFVRERVPFLSIDRYMTDDIEAMAALLRQGALVEVVRGAGIELA</sequence>
<name>TALY_CUPMC</name>
<keyword id="KW-0413">Isomerase</keyword>
<keyword id="KW-0456">Lyase</keyword>
<keyword id="KW-1185">Reference proteome</keyword>
<evidence type="ECO:0000250" key="1"/>
<evidence type="ECO:0000250" key="2">
    <source>
        <dbReference type="UniProtKB" id="P21310"/>
    </source>
</evidence>
<evidence type="ECO:0000255" key="3">
    <source>
        <dbReference type="PROSITE-ProRule" id="PRU10122"/>
    </source>
</evidence>
<evidence type="ECO:0000269" key="4">
    <source>
    </source>
</evidence>
<evidence type="ECO:0000303" key="5">
    <source>
    </source>
</evidence>
<evidence type="ECO:0000305" key="6"/>
<organism>
    <name type="scientific">Cupriavidus metallidurans (strain ATCC 43123 / DSM 2839 / NBRC 102507 / CH34)</name>
    <name type="common">Ralstonia metallidurans</name>
    <dbReference type="NCBI Taxonomy" id="266264"/>
    <lineage>
        <taxon>Bacteria</taxon>
        <taxon>Pseudomonadati</taxon>
        <taxon>Pseudomonadota</taxon>
        <taxon>Betaproteobacteria</taxon>
        <taxon>Burkholderiales</taxon>
        <taxon>Burkholderiaceae</taxon>
        <taxon>Cupriavidus</taxon>
    </lineage>
</organism>
<accession>Q1LRV9</accession>
<gene>
    <name type="ordered locus">Rmet_0231</name>
</gene>